<keyword id="KW-0092">Biotin</keyword>
<keyword id="KW-0150">Chloroplast</keyword>
<keyword id="KW-0275">Fatty acid biosynthesis</keyword>
<keyword id="KW-0276">Fatty acid metabolism</keyword>
<keyword id="KW-0444">Lipid biosynthesis</keyword>
<keyword id="KW-0443">Lipid metabolism</keyword>
<keyword id="KW-0934">Plastid</keyword>
<protein>
    <recommendedName>
        <fullName>Biotin carboxyl carrier protein of acetyl-CoA carboxylase</fullName>
        <shortName>BCCP</shortName>
    </recommendedName>
</protein>
<comment type="function">
    <text evidence="1">This protein is a component of the acetyl coenzyme A carboxylase complex; first, biotin carboxylase catalyzes the carboxylation of the carrier protein and then the transcarboxylase transfers the carboxyl group to form malonyl-CoA.</text>
</comment>
<comment type="pathway">
    <text>Lipid metabolism; fatty acid biosynthesis.</text>
</comment>
<comment type="subcellular location">
    <subcellularLocation>
        <location>Plastid</location>
        <location>Chloroplast</location>
    </subcellularLocation>
</comment>
<sequence length="157" mass="17519">MQITIKDLQDLLSSVQRKKIQTLKLKKNKFELILNKPSKKVPQEVVSLKSSHIFKSIHSETINIPPKKTESINSKPSTNYATIVSPMVGTFYHSPAPGEKIFVQVGDIVKCNQTVCIIEAMKLMNEIEAEIEGIIIEILVKNGDIVDCGQALMKVET</sequence>
<dbReference type="EMBL" id="U38804">
    <property type="protein sequence ID" value="AAC08169.1"/>
    <property type="molecule type" value="Genomic_DNA"/>
</dbReference>
<dbReference type="PIR" id="S73204">
    <property type="entry name" value="S73204"/>
</dbReference>
<dbReference type="RefSeq" id="NP_053893.1">
    <property type="nucleotide sequence ID" value="NC_000925.1"/>
</dbReference>
<dbReference type="SMR" id="P51283"/>
<dbReference type="GeneID" id="809912"/>
<dbReference type="UniPathway" id="UPA00094"/>
<dbReference type="GO" id="GO:0009317">
    <property type="term" value="C:acetyl-CoA carboxylase complex"/>
    <property type="evidence" value="ECO:0007669"/>
    <property type="project" value="InterPro"/>
</dbReference>
<dbReference type="GO" id="GO:0009507">
    <property type="term" value="C:chloroplast"/>
    <property type="evidence" value="ECO:0007669"/>
    <property type="project" value="UniProtKB-SubCell"/>
</dbReference>
<dbReference type="GO" id="GO:0003989">
    <property type="term" value="F:acetyl-CoA carboxylase activity"/>
    <property type="evidence" value="ECO:0007669"/>
    <property type="project" value="InterPro"/>
</dbReference>
<dbReference type="GO" id="GO:0006633">
    <property type="term" value="P:fatty acid biosynthetic process"/>
    <property type="evidence" value="ECO:0007669"/>
    <property type="project" value="UniProtKB-UniPathway"/>
</dbReference>
<dbReference type="CDD" id="cd06850">
    <property type="entry name" value="biotinyl_domain"/>
    <property type="match status" value="1"/>
</dbReference>
<dbReference type="FunFam" id="2.40.50.100:FF:000003">
    <property type="entry name" value="Acetyl-CoA carboxylase biotin carboxyl carrier protein"/>
    <property type="match status" value="1"/>
</dbReference>
<dbReference type="Gene3D" id="2.40.50.100">
    <property type="match status" value="1"/>
</dbReference>
<dbReference type="InterPro" id="IPR001249">
    <property type="entry name" value="AcCoA_biotinCC"/>
</dbReference>
<dbReference type="InterPro" id="IPR001882">
    <property type="entry name" value="Biotin_BS"/>
</dbReference>
<dbReference type="InterPro" id="IPR050709">
    <property type="entry name" value="Biotin_Carboxyl_Carrier/Decarb"/>
</dbReference>
<dbReference type="InterPro" id="IPR000089">
    <property type="entry name" value="Biotin_lipoyl"/>
</dbReference>
<dbReference type="InterPro" id="IPR011053">
    <property type="entry name" value="Single_hybrid_motif"/>
</dbReference>
<dbReference type="NCBIfam" id="TIGR00531">
    <property type="entry name" value="BCCP"/>
    <property type="match status" value="1"/>
</dbReference>
<dbReference type="PANTHER" id="PTHR45266">
    <property type="entry name" value="OXALOACETATE DECARBOXYLASE ALPHA CHAIN"/>
    <property type="match status" value="1"/>
</dbReference>
<dbReference type="PANTHER" id="PTHR45266:SF3">
    <property type="entry name" value="OXALOACETATE DECARBOXYLASE ALPHA CHAIN"/>
    <property type="match status" value="1"/>
</dbReference>
<dbReference type="Pfam" id="PF00364">
    <property type="entry name" value="Biotin_lipoyl"/>
    <property type="match status" value="1"/>
</dbReference>
<dbReference type="PRINTS" id="PR01071">
    <property type="entry name" value="ACOABIOTINCC"/>
</dbReference>
<dbReference type="SUPFAM" id="SSF51230">
    <property type="entry name" value="Single hybrid motif"/>
    <property type="match status" value="1"/>
</dbReference>
<dbReference type="PROSITE" id="PS00188">
    <property type="entry name" value="BIOTIN"/>
    <property type="match status" value="1"/>
</dbReference>
<dbReference type="PROSITE" id="PS50968">
    <property type="entry name" value="BIOTINYL_LIPOYL"/>
    <property type="match status" value="1"/>
</dbReference>
<reference key="1">
    <citation type="journal article" date="1995" name="Plant Mol. Biol. Rep.">
        <title>Complete nucleotide sequence of the Porphyra purpurea chloroplast genome.</title>
        <authorList>
            <person name="Reith M.E."/>
            <person name="Munholland J."/>
        </authorList>
    </citation>
    <scope>NUCLEOTIDE SEQUENCE [LARGE SCALE GENOMIC DNA]</scope>
    <source>
        <strain>Avonport</strain>
    </source>
</reference>
<geneLocation type="chloroplast"/>
<organism>
    <name type="scientific">Porphyra purpurea</name>
    <name type="common">Red seaweed</name>
    <name type="synonym">Ulva purpurea</name>
    <dbReference type="NCBI Taxonomy" id="2787"/>
    <lineage>
        <taxon>Eukaryota</taxon>
        <taxon>Rhodophyta</taxon>
        <taxon>Bangiophyceae</taxon>
        <taxon>Bangiales</taxon>
        <taxon>Bangiaceae</taxon>
        <taxon>Porphyra</taxon>
    </lineage>
</organism>
<evidence type="ECO:0000250" key="1"/>
<evidence type="ECO:0000255" key="2">
    <source>
        <dbReference type="PROSITE-ProRule" id="PRU01066"/>
    </source>
</evidence>
<name>BCCP_PORPU</name>
<gene>
    <name type="primary">accB</name>
</gene>
<accession>P51283</accession>
<feature type="chain" id="PRO_0000146814" description="Biotin carboxyl carrier protein of acetyl-CoA carboxylase">
    <location>
        <begin position="1"/>
        <end position="157"/>
    </location>
</feature>
<feature type="domain" description="Biotinyl-binding" evidence="2">
    <location>
        <begin position="80"/>
        <end position="156"/>
    </location>
</feature>
<feature type="modified residue" description="N6-biotinyllysine" evidence="1 2">
    <location>
        <position position="122"/>
    </location>
</feature>
<proteinExistence type="inferred from homology"/>